<reference key="1">
    <citation type="journal article" date="2004" name="Nat. Genet.">
        <title>Comparison of genome degradation in Paratyphi A and Typhi, human-restricted serovars of Salmonella enterica that cause typhoid.</title>
        <authorList>
            <person name="McClelland M."/>
            <person name="Sanderson K.E."/>
            <person name="Clifton S.W."/>
            <person name="Latreille P."/>
            <person name="Porwollik S."/>
            <person name="Sabo A."/>
            <person name="Meyer R."/>
            <person name="Bieri T."/>
            <person name="Ozersky P."/>
            <person name="McLellan M."/>
            <person name="Harkins C.R."/>
            <person name="Wang C."/>
            <person name="Nguyen C."/>
            <person name="Berghoff A."/>
            <person name="Elliott G."/>
            <person name="Kohlberg S."/>
            <person name="Strong C."/>
            <person name="Du F."/>
            <person name="Carter J."/>
            <person name="Kremizki C."/>
            <person name="Layman D."/>
            <person name="Leonard S."/>
            <person name="Sun H."/>
            <person name="Fulton L."/>
            <person name="Nash W."/>
            <person name="Miner T."/>
            <person name="Minx P."/>
            <person name="Delehaunty K."/>
            <person name="Fronick C."/>
            <person name="Magrini V."/>
            <person name="Nhan M."/>
            <person name="Warren W."/>
            <person name="Florea L."/>
            <person name="Spieth J."/>
            <person name="Wilson R.K."/>
        </authorList>
    </citation>
    <scope>NUCLEOTIDE SEQUENCE [LARGE SCALE GENOMIC DNA]</scope>
    <source>
        <strain>ATCC 9150 / SARB42</strain>
    </source>
</reference>
<dbReference type="EC" id="2.1.3.15" evidence="1"/>
<dbReference type="EMBL" id="CP000026">
    <property type="protein sequence ID" value="AAV76268.1"/>
    <property type="molecule type" value="Genomic_DNA"/>
</dbReference>
<dbReference type="RefSeq" id="WP_000055753.1">
    <property type="nucleotide sequence ID" value="NC_006511.1"/>
</dbReference>
<dbReference type="SMR" id="Q5PD69"/>
<dbReference type="KEGG" id="spt:SPA0239"/>
<dbReference type="HOGENOM" id="CLU_015486_0_2_6"/>
<dbReference type="UniPathway" id="UPA00655">
    <property type="reaction ID" value="UER00711"/>
</dbReference>
<dbReference type="Proteomes" id="UP000008185">
    <property type="component" value="Chromosome"/>
</dbReference>
<dbReference type="GO" id="GO:0009317">
    <property type="term" value="C:acetyl-CoA carboxylase complex"/>
    <property type="evidence" value="ECO:0007669"/>
    <property type="project" value="InterPro"/>
</dbReference>
<dbReference type="GO" id="GO:0003989">
    <property type="term" value="F:acetyl-CoA carboxylase activity"/>
    <property type="evidence" value="ECO:0007669"/>
    <property type="project" value="InterPro"/>
</dbReference>
<dbReference type="GO" id="GO:0005524">
    <property type="term" value="F:ATP binding"/>
    <property type="evidence" value="ECO:0007669"/>
    <property type="project" value="UniProtKB-KW"/>
</dbReference>
<dbReference type="GO" id="GO:0016743">
    <property type="term" value="F:carboxyl- or carbamoyltransferase activity"/>
    <property type="evidence" value="ECO:0007669"/>
    <property type="project" value="UniProtKB-UniRule"/>
</dbReference>
<dbReference type="GO" id="GO:0006633">
    <property type="term" value="P:fatty acid biosynthetic process"/>
    <property type="evidence" value="ECO:0007669"/>
    <property type="project" value="UniProtKB-KW"/>
</dbReference>
<dbReference type="GO" id="GO:2001295">
    <property type="term" value="P:malonyl-CoA biosynthetic process"/>
    <property type="evidence" value="ECO:0007669"/>
    <property type="project" value="UniProtKB-UniRule"/>
</dbReference>
<dbReference type="FunFam" id="3.90.226.10:FF:000008">
    <property type="entry name" value="Acetyl-coenzyme A carboxylase carboxyl transferase subunit alpha"/>
    <property type="match status" value="1"/>
</dbReference>
<dbReference type="Gene3D" id="3.90.226.10">
    <property type="entry name" value="2-enoyl-CoA Hydratase, Chain A, domain 1"/>
    <property type="match status" value="1"/>
</dbReference>
<dbReference type="HAMAP" id="MF_00823">
    <property type="entry name" value="AcetylCoA_CT_alpha"/>
    <property type="match status" value="1"/>
</dbReference>
<dbReference type="InterPro" id="IPR001095">
    <property type="entry name" value="Acetyl_CoA_COase_a_su"/>
</dbReference>
<dbReference type="InterPro" id="IPR029045">
    <property type="entry name" value="ClpP/crotonase-like_dom_sf"/>
</dbReference>
<dbReference type="InterPro" id="IPR011763">
    <property type="entry name" value="COA_CT_C"/>
</dbReference>
<dbReference type="NCBIfam" id="TIGR00513">
    <property type="entry name" value="accA"/>
    <property type="match status" value="1"/>
</dbReference>
<dbReference type="NCBIfam" id="NF041504">
    <property type="entry name" value="AccA_sub"/>
    <property type="match status" value="1"/>
</dbReference>
<dbReference type="NCBIfam" id="NF004344">
    <property type="entry name" value="PRK05724.1"/>
    <property type="match status" value="1"/>
</dbReference>
<dbReference type="PANTHER" id="PTHR42853">
    <property type="entry name" value="ACETYL-COENZYME A CARBOXYLASE CARBOXYL TRANSFERASE SUBUNIT ALPHA"/>
    <property type="match status" value="1"/>
</dbReference>
<dbReference type="PANTHER" id="PTHR42853:SF3">
    <property type="entry name" value="ACETYL-COENZYME A CARBOXYLASE CARBOXYL TRANSFERASE SUBUNIT ALPHA, CHLOROPLASTIC"/>
    <property type="match status" value="1"/>
</dbReference>
<dbReference type="Pfam" id="PF03255">
    <property type="entry name" value="ACCA"/>
    <property type="match status" value="1"/>
</dbReference>
<dbReference type="PRINTS" id="PR01069">
    <property type="entry name" value="ACCCTRFRASEA"/>
</dbReference>
<dbReference type="SUPFAM" id="SSF52096">
    <property type="entry name" value="ClpP/crotonase"/>
    <property type="match status" value="1"/>
</dbReference>
<dbReference type="PROSITE" id="PS50989">
    <property type="entry name" value="COA_CT_CTER"/>
    <property type="match status" value="1"/>
</dbReference>
<keyword id="KW-0067">ATP-binding</keyword>
<keyword id="KW-0963">Cytoplasm</keyword>
<keyword id="KW-0275">Fatty acid biosynthesis</keyword>
<keyword id="KW-0276">Fatty acid metabolism</keyword>
<keyword id="KW-0444">Lipid biosynthesis</keyword>
<keyword id="KW-0443">Lipid metabolism</keyword>
<keyword id="KW-0547">Nucleotide-binding</keyword>
<keyword id="KW-0808">Transferase</keyword>
<evidence type="ECO:0000255" key="1">
    <source>
        <dbReference type="HAMAP-Rule" id="MF_00823"/>
    </source>
</evidence>
<evidence type="ECO:0000255" key="2">
    <source>
        <dbReference type="PROSITE-ProRule" id="PRU01137"/>
    </source>
</evidence>
<gene>
    <name evidence="1" type="primary">accA</name>
    <name type="ordered locus">SPA0239</name>
</gene>
<feature type="chain" id="PRO_0000223821" description="Acetyl-coenzyme A carboxylase carboxyl transferase subunit alpha">
    <location>
        <begin position="1"/>
        <end position="319"/>
    </location>
</feature>
<feature type="domain" description="CoA carboxyltransferase C-terminal" evidence="2">
    <location>
        <begin position="35"/>
        <end position="296"/>
    </location>
</feature>
<name>ACCA_SALPA</name>
<sequence length="319" mass="35344">MSLNFLDFEQPIAELEAKIDSLTAVSRQDEKLDINIDEEVHRLREKSVELTRKIFADLGAWQVAQLARHPQRPYTLDYVRLAFDEFDELAGDRAYADDKAIVGGIARLEGRPVMIIGHQKGRETKEKIRRNFGMPAPEGYRKALRLMEMAERFNMPIITFIDTPGAYPGVGAEERGQSEAIARNLREMSRLNVPVICTVIGEGGSGGALAIGVGDKVNMLQYSTYSVISPEGCASILWKSADKAPLAAEAMGIIAPRLKELKLIDSIIPEPLGGAHRNPEAMAASLKAQLLEDLADLDVLSTDDLKNRRYQRLMSYGYA</sequence>
<protein>
    <recommendedName>
        <fullName evidence="1">Acetyl-coenzyme A carboxylase carboxyl transferase subunit alpha</fullName>
        <shortName evidence="1">ACCase subunit alpha</shortName>
        <shortName evidence="1">Acetyl-CoA carboxylase carboxyltransferase subunit alpha</shortName>
        <ecNumber evidence="1">2.1.3.15</ecNumber>
    </recommendedName>
</protein>
<comment type="function">
    <text evidence="1">Component of the acetyl coenzyme A carboxylase (ACC) complex. First, biotin carboxylase catalyzes the carboxylation of biotin on its carrier protein (BCCP) and then the CO(2) group is transferred by the carboxyltransferase to acetyl-CoA to form malonyl-CoA.</text>
</comment>
<comment type="catalytic activity">
    <reaction evidence="1">
        <text>N(6)-carboxybiotinyl-L-lysyl-[protein] + acetyl-CoA = N(6)-biotinyl-L-lysyl-[protein] + malonyl-CoA</text>
        <dbReference type="Rhea" id="RHEA:54728"/>
        <dbReference type="Rhea" id="RHEA-COMP:10505"/>
        <dbReference type="Rhea" id="RHEA-COMP:10506"/>
        <dbReference type="ChEBI" id="CHEBI:57288"/>
        <dbReference type="ChEBI" id="CHEBI:57384"/>
        <dbReference type="ChEBI" id="CHEBI:83144"/>
        <dbReference type="ChEBI" id="CHEBI:83145"/>
        <dbReference type="EC" id="2.1.3.15"/>
    </reaction>
</comment>
<comment type="pathway">
    <text evidence="1">Lipid metabolism; malonyl-CoA biosynthesis; malonyl-CoA from acetyl-CoA: step 1/1.</text>
</comment>
<comment type="subunit">
    <text evidence="1">Acetyl-CoA carboxylase is a heterohexamer composed of biotin carboxyl carrier protein (AccB), biotin carboxylase (AccC) and two subunits each of ACCase subunit alpha (AccA) and ACCase subunit beta (AccD).</text>
</comment>
<comment type="subcellular location">
    <subcellularLocation>
        <location evidence="1">Cytoplasm</location>
    </subcellularLocation>
</comment>
<comment type="similarity">
    <text evidence="1">Belongs to the AccA family.</text>
</comment>
<organism>
    <name type="scientific">Salmonella paratyphi A (strain ATCC 9150 / SARB42)</name>
    <dbReference type="NCBI Taxonomy" id="295319"/>
    <lineage>
        <taxon>Bacteria</taxon>
        <taxon>Pseudomonadati</taxon>
        <taxon>Pseudomonadota</taxon>
        <taxon>Gammaproteobacteria</taxon>
        <taxon>Enterobacterales</taxon>
        <taxon>Enterobacteriaceae</taxon>
        <taxon>Salmonella</taxon>
    </lineage>
</organism>
<proteinExistence type="inferred from homology"/>
<accession>Q5PD69</accession>